<name>RRAAH_THET8</name>
<gene>
    <name type="ordered locus">TTHA1322</name>
</gene>
<keyword id="KW-0002">3D-structure</keyword>
<keyword id="KW-0456">Lyase</keyword>
<keyword id="KW-0479">Metal-binding</keyword>
<keyword id="KW-1185">Reference proteome</keyword>
<feature type="chain" id="PRO_1000013877" description="4-hydroxy-4-methyl-2-oxoglutarate aldolase">
    <location>
        <begin position="1"/>
        <end position="164"/>
    </location>
</feature>
<feature type="binding site" evidence="1">
    <location>
        <begin position="74"/>
        <end position="77"/>
    </location>
    <ligand>
        <name>substrate</name>
    </ligand>
</feature>
<feature type="binding site" evidence="1">
    <location>
        <position position="96"/>
    </location>
    <ligand>
        <name>substrate</name>
    </ligand>
</feature>
<feature type="binding site" evidence="1">
    <location>
        <position position="97"/>
    </location>
    <ligand>
        <name>a divalent metal cation</name>
        <dbReference type="ChEBI" id="CHEBI:60240"/>
    </ligand>
</feature>
<feature type="helix" evidence="5">
    <location>
        <begin position="5"/>
        <end position="11"/>
    </location>
</feature>
<feature type="strand" evidence="5">
    <location>
        <begin position="15"/>
        <end position="18"/>
    </location>
</feature>
<feature type="strand" evidence="5">
    <location>
        <begin position="22"/>
        <end position="24"/>
    </location>
</feature>
<feature type="strand" evidence="5">
    <location>
        <begin position="26"/>
        <end position="39"/>
    </location>
</feature>
<feature type="strand" evidence="5">
    <location>
        <begin position="41"/>
        <end position="43"/>
    </location>
</feature>
<feature type="helix" evidence="5">
    <location>
        <begin position="45"/>
        <end position="51"/>
    </location>
</feature>
<feature type="strand" evidence="5">
    <location>
        <begin position="58"/>
        <end position="63"/>
    </location>
</feature>
<feature type="strand" evidence="5">
    <location>
        <begin position="69"/>
        <end position="72"/>
    </location>
</feature>
<feature type="helix" evidence="5">
    <location>
        <begin position="75"/>
        <end position="83"/>
    </location>
</feature>
<feature type="strand" evidence="5">
    <location>
        <begin position="88"/>
        <end position="95"/>
    </location>
</feature>
<feature type="helix" evidence="5">
    <location>
        <begin position="98"/>
        <end position="101"/>
    </location>
</feature>
<feature type="strand" evidence="5">
    <location>
        <begin position="104"/>
        <end position="113"/>
    </location>
</feature>
<feature type="strand" evidence="5">
    <location>
        <begin position="115"/>
        <end position="117"/>
    </location>
</feature>
<feature type="strand" evidence="5">
    <location>
        <begin position="125"/>
        <end position="127"/>
    </location>
</feature>
<feature type="strand" evidence="5">
    <location>
        <begin position="130"/>
        <end position="132"/>
    </location>
</feature>
<feature type="strand" evidence="5">
    <location>
        <begin position="135"/>
        <end position="137"/>
    </location>
</feature>
<feature type="strand" evidence="5">
    <location>
        <begin position="142"/>
        <end position="146"/>
    </location>
</feature>
<feature type="strand" evidence="5">
    <location>
        <begin position="149"/>
        <end position="156"/>
    </location>
</feature>
<feature type="strand" evidence="5">
    <location>
        <begin position="160"/>
        <end position="162"/>
    </location>
</feature>
<organism>
    <name type="scientific">Thermus thermophilus (strain ATCC 27634 / DSM 579 / HB8)</name>
    <dbReference type="NCBI Taxonomy" id="300852"/>
    <lineage>
        <taxon>Bacteria</taxon>
        <taxon>Thermotogati</taxon>
        <taxon>Deinococcota</taxon>
        <taxon>Deinococci</taxon>
        <taxon>Thermales</taxon>
        <taxon>Thermaceae</taxon>
        <taxon>Thermus</taxon>
    </lineage>
</organism>
<evidence type="ECO:0000250" key="1"/>
<evidence type="ECO:0000269" key="2">
    <source>
    </source>
</evidence>
<evidence type="ECO:0000305" key="3"/>
<evidence type="ECO:0000305" key="4">
    <source>
    </source>
</evidence>
<evidence type="ECO:0007829" key="5">
    <source>
        <dbReference type="PDB" id="1J3L"/>
    </source>
</evidence>
<proteinExistence type="evidence at protein level"/>
<dbReference type="EC" id="4.1.3.17"/>
<dbReference type="EC" id="4.1.1.112"/>
<dbReference type="EMBL" id="AP008226">
    <property type="protein sequence ID" value="BAD71145.1"/>
    <property type="molecule type" value="Genomic_DNA"/>
</dbReference>
<dbReference type="RefSeq" id="YP_144588.1">
    <property type="nucleotide sequence ID" value="NC_006461.1"/>
</dbReference>
<dbReference type="PDB" id="1J3L">
    <property type="method" value="X-ray"/>
    <property type="resolution" value="2.30 A"/>
    <property type="chains" value="A/B/C/D/E/F=1-164"/>
</dbReference>
<dbReference type="PDBsum" id="1J3L"/>
<dbReference type="SMR" id="Q5SIP7"/>
<dbReference type="EnsemblBacteria" id="BAD71145">
    <property type="protein sequence ID" value="BAD71145"/>
    <property type="gene ID" value="BAD71145"/>
</dbReference>
<dbReference type="GeneID" id="3168568"/>
<dbReference type="KEGG" id="ttj:TTHA1322"/>
<dbReference type="eggNOG" id="COG0684">
    <property type="taxonomic scope" value="Bacteria"/>
</dbReference>
<dbReference type="HOGENOM" id="CLU_072626_4_0_0"/>
<dbReference type="PhylomeDB" id="Q5SIP7"/>
<dbReference type="EvolutionaryTrace" id="Q5SIP7"/>
<dbReference type="Proteomes" id="UP000000532">
    <property type="component" value="Chromosome"/>
</dbReference>
<dbReference type="GO" id="GO:0047443">
    <property type="term" value="F:4-hydroxy-4-methyl-2-oxoglutarate aldolase activity"/>
    <property type="evidence" value="ECO:0007669"/>
    <property type="project" value="UniProtKB-EC"/>
</dbReference>
<dbReference type="GO" id="GO:0046872">
    <property type="term" value="F:metal ion binding"/>
    <property type="evidence" value="ECO:0007669"/>
    <property type="project" value="UniProtKB-KW"/>
</dbReference>
<dbReference type="GO" id="GO:0008948">
    <property type="term" value="F:oxaloacetate decarboxylase activity"/>
    <property type="evidence" value="ECO:0007669"/>
    <property type="project" value="UniProtKB-EC"/>
</dbReference>
<dbReference type="GO" id="GO:0008428">
    <property type="term" value="F:ribonuclease inhibitor activity"/>
    <property type="evidence" value="ECO:0007669"/>
    <property type="project" value="InterPro"/>
</dbReference>
<dbReference type="GO" id="GO:0051252">
    <property type="term" value="P:regulation of RNA metabolic process"/>
    <property type="evidence" value="ECO:0007669"/>
    <property type="project" value="InterPro"/>
</dbReference>
<dbReference type="CDD" id="cd16841">
    <property type="entry name" value="RraA_family"/>
    <property type="match status" value="1"/>
</dbReference>
<dbReference type="Gene3D" id="3.50.30.40">
    <property type="entry name" value="Ribonuclease E inhibitor RraA/RraA-like"/>
    <property type="match status" value="1"/>
</dbReference>
<dbReference type="InterPro" id="IPR010203">
    <property type="entry name" value="RraA"/>
</dbReference>
<dbReference type="InterPro" id="IPR005493">
    <property type="entry name" value="RraA/RraA-like"/>
</dbReference>
<dbReference type="InterPro" id="IPR036704">
    <property type="entry name" value="RraA/RraA-like_sf"/>
</dbReference>
<dbReference type="NCBIfam" id="TIGR01935">
    <property type="entry name" value="NOT-MenG"/>
    <property type="match status" value="1"/>
</dbReference>
<dbReference type="NCBIfam" id="NF006875">
    <property type="entry name" value="PRK09372.1"/>
    <property type="match status" value="1"/>
</dbReference>
<dbReference type="PANTHER" id="PTHR33254">
    <property type="entry name" value="4-HYDROXY-4-METHYL-2-OXOGLUTARATE ALDOLASE 3-RELATED"/>
    <property type="match status" value="1"/>
</dbReference>
<dbReference type="PANTHER" id="PTHR33254:SF4">
    <property type="entry name" value="4-HYDROXY-4-METHYL-2-OXOGLUTARATE ALDOLASE 3-RELATED"/>
    <property type="match status" value="1"/>
</dbReference>
<dbReference type="Pfam" id="PF03737">
    <property type="entry name" value="RraA-like"/>
    <property type="match status" value="1"/>
</dbReference>
<dbReference type="SUPFAM" id="SSF89562">
    <property type="entry name" value="RraA-like"/>
    <property type="match status" value="1"/>
</dbReference>
<accession>Q5SIP7</accession>
<accession>P83846</accession>
<sequence>MEARTTDLSDLYPEGEALPMVFKSFGGRARFAGRVRTLRVFEDNALVRKVLEEEGAGQVLFVDGGGSLRTALLGGNLARLAWEKGWAGVVVHGAVRDTEELREVPIGLLALAATPKKSAKEGKGEVDVPLKVLGVEVLPGSFLLADEDGLLLLPEPPSGVRSGG</sequence>
<reference key="1">
    <citation type="submission" date="2004-11" db="EMBL/GenBank/DDBJ databases">
        <title>Complete genome sequence of Thermus thermophilus HB8.</title>
        <authorList>
            <person name="Masui R."/>
            <person name="Kurokawa K."/>
            <person name="Nakagawa N."/>
            <person name="Tokunaga F."/>
            <person name="Koyama Y."/>
            <person name="Shibata T."/>
            <person name="Oshima T."/>
            <person name="Yokoyama S."/>
            <person name="Yasunaga T."/>
            <person name="Kuramitsu S."/>
        </authorList>
    </citation>
    <scope>NUCLEOTIDE SEQUENCE [LARGE SCALE GENOMIC DNA]</scope>
    <source>
        <strain>ATCC 27634 / DSM 579 / HB8</strain>
    </source>
</reference>
<reference key="2">
    <citation type="journal article" date="2014" name="Biochemistry">
        <title>Biochemical and structural analysis of RraA proteins to decipher their relationships with 4-hydroxy-4-methyl-2-oxoglutarate/4-carboxy-4-hydroxy-2-oxoadipate aldolases.</title>
        <authorList>
            <person name="Mazurkewich S."/>
            <person name="Wang W."/>
            <person name="Seah S.Y."/>
        </authorList>
    </citation>
    <scope>FUNCTION</scope>
    <scope>CATALYTIC ACTIVITY</scope>
    <scope>BIOPHYSICOCHEMICAL PROPERTIES</scope>
    <scope>ACTIVITY REGULATION</scope>
    <scope>COFACTOR</scope>
</reference>
<reference key="3">
    <citation type="journal article" date="2004" name="Acta Crystallogr. D">
        <title>Structure of the RNA-processing inhibitor RraA from Thermus thermophilis.</title>
        <authorList>
            <person name="Rehse P.H."/>
            <person name="Kuroishi C."/>
            <person name="Tahirov T.H."/>
        </authorList>
    </citation>
    <scope>X-RAY CRYSTALLOGRAPHY (2.3 ANGSTROMS)</scope>
    <scope>SUBUNIT</scope>
</reference>
<comment type="function">
    <text evidence="2">Catalyzes the aldol cleavage of 4-hydroxy-4-methyl-2-oxoglutarate (HMG) into 2 molecules of pyruvate. Also contains a secondary oxaloacetate (OAA) decarboxylase activity due to the common pyruvate enolate transition state formed following C-C bond cleavage in the retro-aldol and decarboxylation reactions.</text>
</comment>
<comment type="catalytic activity">
    <reaction evidence="2">
        <text>4-hydroxy-4-methyl-2-oxoglutarate = 2 pyruvate</text>
        <dbReference type="Rhea" id="RHEA:22748"/>
        <dbReference type="ChEBI" id="CHEBI:15361"/>
        <dbReference type="ChEBI" id="CHEBI:58276"/>
        <dbReference type="EC" id="4.1.3.17"/>
    </reaction>
</comment>
<comment type="catalytic activity">
    <reaction evidence="2">
        <text>oxaloacetate + H(+) = pyruvate + CO2</text>
        <dbReference type="Rhea" id="RHEA:15641"/>
        <dbReference type="ChEBI" id="CHEBI:15361"/>
        <dbReference type="ChEBI" id="CHEBI:15378"/>
        <dbReference type="ChEBI" id="CHEBI:16452"/>
        <dbReference type="ChEBI" id="CHEBI:16526"/>
        <dbReference type="EC" id="4.1.1.112"/>
    </reaction>
</comment>
<comment type="cofactor">
    <cofactor evidence="2">
        <name>Ni(2+)</name>
        <dbReference type="ChEBI" id="CHEBI:49786"/>
    </cofactor>
    <cofactor evidence="2">
        <name>Co(2+)</name>
        <dbReference type="ChEBI" id="CHEBI:48828"/>
    </cofactor>
    <cofactor evidence="2">
        <name>Zn(2+)</name>
        <dbReference type="ChEBI" id="CHEBI:29105"/>
    </cofactor>
    <text evidence="2">Divalent metal cation. Has preference for nickel and cobalt ions for the HMG aldolase activity. Has preference for zinc ions for the OAA decarboxylase activity.</text>
</comment>
<comment type="activity regulation">
    <text evidence="2">Competitively inhibited by oxalate, a pyruvate enolate analog.</text>
</comment>
<comment type="biophysicochemical properties">
    <kinetics>
        <KM evidence="2">150.7 uM for 4-hydroxy-4-methyl-2-oxoglutarate</KM>
        <KM evidence="2">211.4 uM for oxaloacetate</KM>
        <text>kcat is 0.356 sec(-1) with 4-hydroxy-4-methyl-2-oxoglutarate as substrate and 1.06 sec(-1) with oxaloacetate as substrate.</text>
    </kinetics>
</comment>
<comment type="subunit">
    <text evidence="4">Homotrimer.</text>
</comment>
<comment type="similarity">
    <text evidence="3">Belongs to the class II aldolase/RraA-like family.</text>
</comment>
<protein>
    <recommendedName>
        <fullName>4-hydroxy-4-methyl-2-oxoglutarate aldolase</fullName>
        <shortName>HMG aldolase</shortName>
        <ecNumber>4.1.3.17</ecNumber>
    </recommendedName>
    <alternativeName>
        <fullName>Oxaloacetate decarboxylase</fullName>
        <shortName>OAA decarboxylase</shortName>
        <ecNumber>4.1.1.112</ecNumber>
    </alternativeName>
    <alternativeName>
        <fullName>Regulator of ribonuclease activity homolog</fullName>
    </alternativeName>
</protein>